<comment type="function">
    <text evidence="1">Inhibits potassium fluxes in cells, possibly by retaining potassium channels in the cytoplasm.</text>
</comment>
<comment type="subcellular location">
    <subcellularLocation>
        <location evidence="1">Endoplasmic reticulum</location>
    </subcellularLocation>
</comment>
<reference key="1">
    <citation type="submission" date="2002-12" db="EMBL/GenBank/DDBJ databases">
        <title>Sequencing of the complete coding region of IMAGE clone 5336560 (5' end).</title>
        <authorList>
            <person name="Skoldberg F."/>
            <person name="Alimohammadi M."/>
            <person name="Hedstrand H."/>
            <person name="Kampe O."/>
        </authorList>
    </citation>
    <scope>NUCLEOTIDE SEQUENCE [MRNA]</scope>
</reference>
<reference key="2">
    <citation type="submission" date="2004-06" db="EMBL/GenBank/DDBJ databases">
        <authorList>
            <consortium name="NIH - Xenopus Gene Collection (XGC) project"/>
        </authorList>
    </citation>
    <scope>NUCLEOTIDE SEQUENCE [LARGE SCALE MRNA]</scope>
    <source>
        <tissue>Embryo</tissue>
    </source>
</reference>
<gene>
    <name type="primary">kcnrg</name>
</gene>
<protein>
    <recommendedName>
        <fullName>Putative potassium channel regulatory protein</fullName>
    </recommendedName>
</protein>
<evidence type="ECO:0000250" key="1">
    <source>
        <dbReference type="UniProtKB" id="Q8N5I3"/>
    </source>
</evidence>
<evidence type="ECO:0000256" key="2">
    <source>
        <dbReference type="SAM" id="MobiDB-lite"/>
    </source>
</evidence>
<evidence type="ECO:0000305" key="3"/>
<sequence>MSNQELVTLNVGGMKFSTLSATLRRFPDSRLARMLDNADREIRIINGHYFIDRDGSLFSYILDYVRTSQLSLPSGFSEFERLQREAEFYQLLSLADLLSQDTLYRPRVEILEVRFLLQETHAFFRLFCSSSTTIEMMADRILMFAEQPMGSQGWSFPFSAQKPLAPVPLQRPSHHDVVFQCGTDYTNGEHVGARYVSIKPDQRKLINGTNVLGLLLDILLKEGFCLISTRSVSAEEKVECYTFERKKRPEVLTIHENSRQENYETETVQVKQAKPNKKR</sequence>
<feature type="chain" id="PRO_0000238947" description="Putative potassium channel regulatory protein">
    <location>
        <begin position="1"/>
        <end position="279"/>
    </location>
</feature>
<feature type="domain" description="BTB">
    <location>
        <begin position="5"/>
        <end position="74"/>
    </location>
</feature>
<feature type="region of interest" description="Disordered" evidence="2">
    <location>
        <begin position="256"/>
        <end position="279"/>
    </location>
</feature>
<feature type="sequence conflict" description="In Ref. 1; AAO27467." evidence="3" ref="1">
    <original>R</original>
    <variation>RF</variation>
    <location>
        <position position="140"/>
    </location>
</feature>
<proteinExistence type="evidence at transcript level"/>
<dbReference type="EMBL" id="AY190924">
    <property type="protein sequence ID" value="AAO27467.1"/>
    <property type="molecule type" value="mRNA"/>
</dbReference>
<dbReference type="EMBL" id="BC074581">
    <property type="protein sequence ID" value="AAH74581.1"/>
    <property type="molecule type" value="mRNA"/>
</dbReference>
<dbReference type="RefSeq" id="NP_988863.1">
    <property type="nucleotide sequence ID" value="NM_203532.1"/>
</dbReference>
<dbReference type="FunCoup" id="Q6DK85">
    <property type="interactions" value="9"/>
</dbReference>
<dbReference type="STRING" id="8364.ENSXETP00000037227"/>
<dbReference type="PaxDb" id="8364-ENSXETP00000034223"/>
<dbReference type="DNASU" id="394457"/>
<dbReference type="GeneID" id="394457"/>
<dbReference type="KEGG" id="xtr:394457"/>
<dbReference type="AGR" id="Xenbase:XB-GENE-987331"/>
<dbReference type="CTD" id="283518"/>
<dbReference type="Xenbase" id="XB-GENE-987331">
    <property type="gene designation" value="kcnrg"/>
</dbReference>
<dbReference type="eggNOG" id="KOG2723">
    <property type="taxonomic scope" value="Eukaryota"/>
</dbReference>
<dbReference type="InParanoid" id="Q6DK85"/>
<dbReference type="OrthoDB" id="10025005at2759"/>
<dbReference type="Proteomes" id="UP000008143">
    <property type="component" value="Chromosome 2"/>
</dbReference>
<dbReference type="Bgee" id="ENSXETG00000034495">
    <property type="expression patterns" value="Expressed in neurula embryo and 1 other cell type or tissue"/>
</dbReference>
<dbReference type="GO" id="GO:0005783">
    <property type="term" value="C:endoplasmic reticulum"/>
    <property type="evidence" value="ECO:0000250"/>
    <property type="project" value="UniProtKB"/>
</dbReference>
<dbReference type="GO" id="GO:1902260">
    <property type="term" value="P:negative regulation of delayed rectifier potassium channel activity"/>
    <property type="evidence" value="ECO:0000250"/>
    <property type="project" value="UniProtKB"/>
</dbReference>
<dbReference type="GO" id="GO:0051260">
    <property type="term" value="P:protein homooligomerization"/>
    <property type="evidence" value="ECO:0007669"/>
    <property type="project" value="InterPro"/>
</dbReference>
<dbReference type="CDD" id="cd18375">
    <property type="entry name" value="BTB_POZ_KCNRG"/>
    <property type="match status" value="1"/>
</dbReference>
<dbReference type="Gene3D" id="3.30.710.10">
    <property type="entry name" value="Potassium Channel Kv1.1, Chain A"/>
    <property type="match status" value="1"/>
</dbReference>
<dbReference type="InterPro" id="IPR000210">
    <property type="entry name" value="BTB/POZ_dom"/>
</dbReference>
<dbReference type="InterPro" id="IPR011333">
    <property type="entry name" value="SKP1/BTB/POZ_sf"/>
</dbReference>
<dbReference type="InterPro" id="IPR003131">
    <property type="entry name" value="T1-type_BTB"/>
</dbReference>
<dbReference type="PANTHER" id="PTHR14499:SF5">
    <property type="entry name" value="POTASSIUM CHANNEL REGULATORY PROTEIN"/>
    <property type="match status" value="1"/>
</dbReference>
<dbReference type="PANTHER" id="PTHR14499">
    <property type="entry name" value="POTASSIUM CHANNEL TETRAMERIZATION DOMAIN-CONTAINING"/>
    <property type="match status" value="1"/>
</dbReference>
<dbReference type="Pfam" id="PF02214">
    <property type="entry name" value="BTB_2"/>
    <property type="match status" value="1"/>
</dbReference>
<dbReference type="SMART" id="SM00225">
    <property type="entry name" value="BTB"/>
    <property type="match status" value="1"/>
</dbReference>
<dbReference type="SUPFAM" id="SSF54695">
    <property type="entry name" value="POZ domain"/>
    <property type="match status" value="1"/>
</dbReference>
<keyword id="KW-0256">Endoplasmic reticulum</keyword>
<keyword id="KW-1185">Reference proteome</keyword>
<name>KCNRG_XENTR</name>
<organism>
    <name type="scientific">Xenopus tropicalis</name>
    <name type="common">Western clawed frog</name>
    <name type="synonym">Silurana tropicalis</name>
    <dbReference type="NCBI Taxonomy" id="8364"/>
    <lineage>
        <taxon>Eukaryota</taxon>
        <taxon>Metazoa</taxon>
        <taxon>Chordata</taxon>
        <taxon>Craniata</taxon>
        <taxon>Vertebrata</taxon>
        <taxon>Euteleostomi</taxon>
        <taxon>Amphibia</taxon>
        <taxon>Batrachia</taxon>
        <taxon>Anura</taxon>
        <taxon>Pipoidea</taxon>
        <taxon>Pipidae</taxon>
        <taxon>Xenopodinae</taxon>
        <taxon>Xenopus</taxon>
        <taxon>Silurana</taxon>
    </lineage>
</organism>
<accession>Q6DK85</accession>
<accession>Q804B8</accession>